<keyword id="KW-0002">3D-structure</keyword>
<keyword id="KW-0067">ATP-binding</keyword>
<keyword id="KW-1003">Cell membrane</keyword>
<keyword id="KW-0472">Membrane</keyword>
<keyword id="KW-0547">Nucleotide-binding</keyword>
<keyword id="KW-1185">Reference proteome</keyword>
<keyword id="KW-0677">Repeat</keyword>
<keyword id="KW-0812">Transmembrane</keyword>
<keyword id="KW-1133">Transmembrane helix</keyword>
<keyword id="KW-0813">Transport</keyword>
<sequence length="1315" mass="145547">MSTVLVRRKERRQPPQMPRGEILLESPPELPEVVTNSFQNVLMYLPMAAGSAAMVFTFLNHRNTLQLVAGGMFALSMFGMMFGQLSQQSGERKTKLNSARRDYLRYLGQVRQRVRKAAKQQREALEWNNPAPGRLWSMVMSPRLWERRSSDADFAQVRIGAGPQRLAVQLIPPETKPVEDLEPMSAGALRRFLRAHSTVPDLPVAISLRSFARILPDGDPKAVYGMVRALIMQLAAFHSPDDVRITVCASRERMPQWQWMKWLPHSLHPTEYDAAGQVRLLTHSLVELESMLGPEIKDRGMFGASRAPAEPFHLVIVDGGQASYDSQIASDGIDGVCVIDLTGSVAETNEATMLRLRVTPERVYVVKRDRAGKEVLSSVGRPDQASIAEAEALARQLAPFRTSAADEPEEDVLSANMTLTSLLHIDNPYNLDPAVLWRPRPQRNRLRVPIGLDADGRPLELDIKESAQGGMGPHGLCIGATGSGKSELLRTLVLALAMTHSPEVLNFVLVDFKGGATFLGMEGLRHVSAIITNLEEELPLVDRMYDALHGEMVRRQEHLRHSGNYASLRDYEKARMEGAPLPPMPTLFIVLDEFSELLSAKPDFAELFVMIGRLGRSLGVHLLLASQRLEEGKLRGLDTHLSYRIGLRTFSAMESRVVLGVPDAYELPPSPGNGYLKFATEPLVRFKAAYVSGPVDEEPQTRSEGPQIVRQVLPYLTDYIRPQVVEQPQPEQRAEENKSSESLFDVVVRQLAGHGPEPHQIWLPPLDVPPTLDELLPPLSPSAAHGYTADGWEWRGRLHAVVGLVDRPFDQRRDPYWLDLSGGAGHVGVAGGPQTGKSTMLRTLITSLALLHTPQEVQFYCLDFGGGTLAGLAELPHVGSVATRLDADRIRRTVAEVSALLEQREQEFTERGIDSMATYRRLRATGEYAGDGFGDVFLVVDNWLTLRQDYEALEDSITQLAARGLGYGIHVVLSSNKWSEFRTSIRDLLGTKLELRLGDPYESEVDRKKAANVPENRPGRGLTRDGYHFLTALPRIDGDTSAETLTEGIATTVKTIREAWHGPTAPPVRMLPNVLPAAQLPSAAESGTRIPIGIDEDSLSPVYLDFNTDPHFLVFGDTECGKSNLLRLITAGIIERYTPQQARLIFIDYSRSLLDVATTEHQIGYAASSTAASSLVRDIKGAMEARLPPPDLTPEQLRSRSWWTGAELFLVVDDYEMVATSDNPLRPLAELLPQARDIGLHLIIARSMGGAGRALYEPIIQRIKEMASPGLVMSGNKDEGILLGNVKPHKLPQGRGYFVERRSGTRLIQTAYRES</sequence>
<proteinExistence type="evidence at protein level"/>
<evidence type="ECO:0000255" key="1"/>
<evidence type="ECO:0000255" key="2">
    <source>
        <dbReference type="PROSITE-ProRule" id="PRU00289"/>
    </source>
</evidence>
<evidence type="ECO:0000256" key="3">
    <source>
        <dbReference type="SAM" id="MobiDB-lite"/>
    </source>
</evidence>
<evidence type="ECO:0000269" key="4">
    <source>
    </source>
</evidence>
<evidence type="ECO:0000303" key="5">
    <source>
    </source>
</evidence>
<evidence type="ECO:0000305" key="6"/>
<evidence type="ECO:0000305" key="7">
    <source>
    </source>
</evidence>
<evidence type="ECO:0007744" key="8">
    <source>
        <dbReference type="PDB" id="4N1A"/>
    </source>
</evidence>
<evidence type="ECO:0007744" key="9">
    <source>
        <dbReference type="PDB" id="4NH0"/>
    </source>
</evidence>
<evidence type="ECO:0007829" key="10">
    <source>
        <dbReference type="PDB" id="4N1A"/>
    </source>
</evidence>
<organism>
    <name type="scientific">Thermomonospora curvata (strain ATCC 19995 / DSM 43183 / JCM 3096 / KCTC 9072 / NBRC 15933 / NCIMB 10081 / Henssen B9)</name>
    <dbReference type="NCBI Taxonomy" id="471852"/>
    <lineage>
        <taxon>Bacteria</taxon>
        <taxon>Bacillati</taxon>
        <taxon>Actinomycetota</taxon>
        <taxon>Actinomycetes</taxon>
        <taxon>Streptosporangiales</taxon>
        <taxon>Thermomonosporaceae</taxon>
        <taxon>Thermomonospora</taxon>
    </lineage>
</organism>
<dbReference type="EMBL" id="CP001738">
    <property type="protein sequence ID" value="ACY96202.1"/>
    <property type="molecule type" value="Genomic_DNA"/>
</dbReference>
<dbReference type="RefSeq" id="WP_012850986.1">
    <property type="nucleotide sequence ID" value="NC_013510.1"/>
</dbReference>
<dbReference type="PDB" id="4N1A">
    <property type="method" value="X-ray"/>
    <property type="resolution" value="3.24 A"/>
    <property type="chains" value="A/B/C/E=759-1315"/>
</dbReference>
<dbReference type="PDB" id="4NH0">
    <property type="method" value="X-ray"/>
    <property type="resolution" value="2.90 A"/>
    <property type="chains" value="A/B=200-1315"/>
</dbReference>
<dbReference type="PDBsum" id="4N1A"/>
<dbReference type="PDBsum" id="4NH0"/>
<dbReference type="SMR" id="D1A4G7"/>
<dbReference type="STRING" id="471852.Tcur_0607"/>
<dbReference type="KEGG" id="tcu:Tcur_0607"/>
<dbReference type="eggNOG" id="COG1674">
    <property type="taxonomic scope" value="Bacteria"/>
</dbReference>
<dbReference type="HOGENOM" id="CLU_003134_1_0_11"/>
<dbReference type="OrthoDB" id="9807790at2"/>
<dbReference type="EvolutionaryTrace" id="D1A4G7"/>
<dbReference type="Proteomes" id="UP000001918">
    <property type="component" value="Chromosome"/>
</dbReference>
<dbReference type="GO" id="GO:0005886">
    <property type="term" value="C:plasma membrane"/>
    <property type="evidence" value="ECO:0007669"/>
    <property type="project" value="UniProtKB-SubCell"/>
</dbReference>
<dbReference type="GO" id="GO:0005524">
    <property type="term" value="F:ATP binding"/>
    <property type="evidence" value="ECO:0007669"/>
    <property type="project" value="UniProtKB-KW"/>
</dbReference>
<dbReference type="GO" id="GO:0016887">
    <property type="term" value="F:ATP hydrolysis activity"/>
    <property type="evidence" value="ECO:0007669"/>
    <property type="project" value="InterPro"/>
</dbReference>
<dbReference type="GO" id="GO:0003677">
    <property type="term" value="F:DNA binding"/>
    <property type="evidence" value="ECO:0007669"/>
    <property type="project" value="InterPro"/>
</dbReference>
<dbReference type="DisProt" id="DP02490"/>
<dbReference type="Gene3D" id="3.40.50.300">
    <property type="entry name" value="P-loop containing nucleotide triphosphate hydrolases"/>
    <property type="match status" value="4"/>
</dbReference>
<dbReference type="InterPro" id="IPR003593">
    <property type="entry name" value="AAA+_ATPase"/>
</dbReference>
<dbReference type="InterPro" id="IPR023836">
    <property type="entry name" value="EccCa-like_Actinobacteria"/>
</dbReference>
<dbReference type="InterPro" id="IPR023837">
    <property type="entry name" value="EccCb-like_Actinobacteria"/>
</dbReference>
<dbReference type="InterPro" id="IPR050206">
    <property type="entry name" value="FtsK/SpoIIIE/SftA"/>
</dbReference>
<dbReference type="InterPro" id="IPR002543">
    <property type="entry name" value="FtsK_dom"/>
</dbReference>
<dbReference type="InterPro" id="IPR027417">
    <property type="entry name" value="P-loop_NTPase"/>
</dbReference>
<dbReference type="NCBIfam" id="TIGR03924">
    <property type="entry name" value="T7SS_EccC_a"/>
    <property type="match status" value="1"/>
</dbReference>
<dbReference type="NCBIfam" id="TIGR03925">
    <property type="entry name" value="T7SS_EccC_b"/>
    <property type="match status" value="1"/>
</dbReference>
<dbReference type="PANTHER" id="PTHR22683">
    <property type="entry name" value="SPORULATION PROTEIN RELATED"/>
    <property type="match status" value="1"/>
</dbReference>
<dbReference type="PANTHER" id="PTHR22683:SF1">
    <property type="entry name" value="TYPE VII SECRETION SYSTEM PROTEIN ESSC"/>
    <property type="match status" value="1"/>
</dbReference>
<dbReference type="Pfam" id="PF01580">
    <property type="entry name" value="FtsK_SpoIIIE"/>
    <property type="match status" value="3"/>
</dbReference>
<dbReference type="SMART" id="SM00382">
    <property type="entry name" value="AAA"/>
    <property type="match status" value="3"/>
</dbReference>
<dbReference type="SUPFAM" id="SSF52540">
    <property type="entry name" value="P-loop containing nucleoside triphosphate hydrolases"/>
    <property type="match status" value="3"/>
</dbReference>
<dbReference type="PROSITE" id="PS50901">
    <property type="entry name" value="FTSK"/>
    <property type="match status" value="3"/>
</dbReference>
<gene>
    <name evidence="5" type="primary">eccC</name>
    <name type="ordered locus">Tcur_0607</name>
</gene>
<protein>
    <recommendedName>
        <fullName evidence="5">ESX secretion system protein EccC</fullName>
    </recommendedName>
    <alternativeName>
        <fullName evidence="6">Type VII secretion system protein EccC</fullName>
        <shortName evidence="6">T7SS protein EccC</shortName>
    </alternativeName>
</protein>
<reference key="1">
    <citation type="journal article" date="2011" name="Stand. Genomic Sci.">
        <title>Complete genome sequence of Thermomonospora curvata type strain (B9).</title>
        <authorList>
            <person name="Chertkov O."/>
            <person name="Sikorski J."/>
            <person name="Nolan M."/>
            <person name="Lapidus A."/>
            <person name="Lucas S."/>
            <person name="Del Rio T.G."/>
            <person name="Tice H."/>
            <person name="Cheng J.F."/>
            <person name="Goodwin L."/>
            <person name="Pitluck S."/>
            <person name="Liolios K."/>
            <person name="Ivanova N."/>
            <person name="Mavromatis K."/>
            <person name="Mikhailova N."/>
            <person name="Ovchinnikova G."/>
            <person name="Pati A."/>
            <person name="Chen A."/>
            <person name="Palaniappan K."/>
            <person name="Djao O.D."/>
            <person name="Land M."/>
            <person name="Hauser L."/>
            <person name="Chang Y.J."/>
            <person name="Jeffries C.D."/>
            <person name="Brettin T."/>
            <person name="Han C."/>
            <person name="Detter J.C."/>
            <person name="Rohde M."/>
            <person name="Goeker M."/>
            <person name="Woyke T."/>
            <person name="Bristow J."/>
            <person name="Eisen J.A."/>
            <person name="Markowitz V."/>
            <person name="Hugenholtz P."/>
            <person name="Klenk H.P."/>
            <person name="Kyrpides N.C."/>
        </authorList>
    </citation>
    <scope>NUCLEOTIDE SEQUENCE [LARGE SCALE GENOMIC DNA]</scope>
    <source>
        <strain>ATCC 19995 / DSM 43183 / JCM 3096 / KCTC 9072 / NBRC 15933 / NCIMB 10081 / Henssen B9</strain>
    </source>
</reference>
<reference evidence="8 9" key="2">
    <citation type="journal article" date="2015" name="Cell">
        <title>Substrates control multimerization and activation of the multi-domain ATPase motor of type VII secretion.</title>
        <authorList>
            <person name="Rosenberg O.S."/>
            <person name="Dovala D."/>
            <person name="Li X."/>
            <person name="Connolly L."/>
            <person name="Bendebury A."/>
            <person name="Finer-Moore J."/>
            <person name="Holton J."/>
            <person name="Cheng Y."/>
            <person name="Stroud R.M."/>
            <person name="Cox J.S."/>
        </authorList>
    </citation>
    <scope>X-RAY CRYSTALLOGRAPHY (2.90 ANGSTROMS) OF 200-1315 IN COMPLEX WITH ATP</scope>
    <scope>X-RAY CRYSTALLOGRAPHY (3.24 ANGSTROMS) OF 759-1315 IN COMPLEX WITH ESXB C-TERMINUS AND ATP</scope>
    <scope>ELECTRON MICROSCOPY</scope>
    <scope>FUNCTION</scope>
    <scope>ACTIVITY REGULATION</scope>
    <scope>PROBABLE ACTIVE SITE</scope>
    <scope>INTERACTION WITH ESXB</scope>
    <scope>SUBUNIT</scope>
    <scope>DOMAIN</scope>
    <scope>PROBABLE TOPOLOGY</scope>
    <scope>MUTAGENESIS OF ARG-543; GLU-593; ARG-616; ARG-892; ILE-1163; ILE-1179 AND LEU-1208</scope>
    <source>
        <strain>ATCC 19995 / DSM 43183 / JCM 3096 / KCTC 9072 / NBRC 15933 / NCIMB 10081 / Henssen B9</strain>
    </source>
</reference>
<comment type="function">
    <text evidence="4">Part of the ESX specialized secretion system, which exports proteins from the cell including EsxA (ESAT-6) and EsxB (CFP-10) (PubMed:25865481). Has weak intrinsic ATPase activity; probably only the first FtsK domain can hydrolyze ATP (PubMed:25865481). Might be the translocase subunit (PubMed:25865481).</text>
</comment>
<comment type="activity regulation">
    <text evidence="4">EsxB binding to the third FtsK domain causes multimerization; a subsequent unknown step relieves the allosteric inhibition of linker 2 on FtsK domain 1, activating the ATPase activity; a mutant EsxB ('Ala-98') does not cause multimers to form (PubMed:25865481).</text>
</comment>
<comment type="subunit">
    <text evidence="4">The cytosolic domain can form homodimers (PubMed:25865481). Binds EsxB, which leads to multimerization, however EsxA disassembles the multimers, possibly by making EccC-EsxA-EsxB trimers instead of EccC-EsxB-EsxB-EccC tetramers. Forms a complex with EsxA and EsxB, probably wholly mediated by EsxB (PubMed:25865481).</text>
</comment>
<comment type="subcellular location">
    <subcellularLocation>
        <location evidence="1">Cell membrane</location>
        <topology evidence="1">Multi-pass membrane protein</topology>
    </subcellularLocation>
</comment>
<comment type="domain">
    <text evidence="4">The cytoplasmic domain is a rigid structure with 4 domains (residues 276 to 401 form an unnamed domain) plus the 3 FtsK (ATPase) domains which are connected by short linkers. Binds EsxB via a small pocket (residues 1163-1208) in the third FtsK (ATPase) domain; the linkers between FtsK 1-2 and FtsK 2-3 bind in an analogous manner to FtsK 1 and FtsK 2. Linker 2 binding to FtsK 1 decreases its ATPase activity and probably controls it (PubMed:25865481).</text>
</comment>
<comment type="miscellaneous">
    <text evidence="7">Unlike the well characterized M.tuberculosis ESX-1 cluster, this protein is not split into 2 genes. This subunit and a WGX100 family protein are the only proteins universally associated with T7SS.</text>
</comment>
<accession>D1A4G7</accession>
<name>ECCC_THECD</name>
<feature type="chain" id="PRO_0000438309" description="ESX secretion system protein EccC">
    <location>
        <begin position="1"/>
        <end position="1315"/>
    </location>
</feature>
<feature type="topological domain" description="Cytoplasmic" evidence="6">
    <location>
        <begin position="1"/>
        <end position="40"/>
    </location>
</feature>
<feature type="transmembrane region" description="Helical" evidence="1">
    <location>
        <begin position="41"/>
        <end position="61"/>
    </location>
</feature>
<feature type="topological domain" description="Extracellular" evidence="6">
    <location>
        <begin position="62"/>
        <end position="64"/>
    </location>
</feature>
<feature type="transmembrane region" description="Helical" evidence="1">
    <location>
        <begin position="65"/>
        <end position="85"/>
    </location>
</feature>
<feature type="topological domain" description="Cytoplasmic" evidence="7">
    <location>
        <begin position="86"/>
        <end position="1315"/>
    </location>
</feature>
<feature type="domain" description="FtsK 1" evidence="2">
    <location>
        <begin position="456"/>
        <end position="656"/>
    </location>
</feature>
<feature type="domain" description="FtsK 2" evidence="2">
    <location>
        <begin position="813"/>
        <end position="1004"/>
    </location>
</feature>
<feature type="domain" description="FtsK 3" evidence="2">
    <location>
        <begin position="1099"/>
        <end position="1282"/>
    </location>
</feature>
<feature type="region of interest" description="Disordered" evidence="3">
    <location>
        <begin position="1"/>
        <end position="21"/>
    </location>
</feature>
<feature type="region of interest" description="Binds EsxB" evidence="4">
    <location>
        <begin position="721"/>
        <end position="1315"/>
    </location>
</feature>
<feature type="compositionally biased region" description="Basic residues" evidence="3">
    <location>
        <begin position="1"/>
        <end position="11"/>
    </location>
</feature>
<feature type="active site" evidence="7">
    <location>
        <position position="593"/>
    </location>
</feature>
<feature type="binding site" evidence="2">
    <location>
        <begin position="479"/>
        <end position="486"/>
    </location>
    <ligand>
        <name>ATP</name>
        <dbReference type="ChEBI" id="CHEBI:30616"/>
        <label>1</label>
    </ligand>
</feature>
<feature type="binding site" evidence="2 8 9">
    <location>
        <begin position="834"/>
        <end position="839"/>
    </location>
    <ligand>
        <name>ATP</name>
        <dbReference type="ChEBI" id="CHEBI:30616"/>
        <label>2</label>
    </ligand>
</feature>
<feature type="binding site" evidence="8 9">
    <location>
        <position position="1031"/>
    </location>
    <ligand>
        <name>ATP</name>
        <dbReference type="ChEBI" id="CHEBI:30616"/>
        <label>2</label>
    </ligand>
</feature>
<feature type="binding site" evidence="2 8 9">
    <location>
        <begin position="1119"/>
        <end position="1124"/>
    </location>
    <ligand>
        <name>ATP</name>
        <dbReference type="ChEBI" id="CHEBI:30616"/>
        <label>3</label>
    </ligand>
</feature>
<feature type="binding site" evidence="8 9">
    <location>
        <position position="1293"/>
    </location>
    <ligand>
        <name>ATP</name>
        <dbReference type="ChEBI" id="CHEBI:30616"/>
        <label>3</label>
    </ligand>
</feature>
<feature type="binding site" evidence="8 9">
    <location>
        <begin position="1310"/>
        <end position="1311"/>
    </location>
    <ligand>
        <name>ATP</name>
        <dbReference type="ChEBI" id="CHEBI:30616"/>
        <label>3</label>
    </ligand>
</feature>
<feature type="mutagenesis site" description="Increased intrinsic ATPase activity; ATPase is activated by wild-type but not mutant EsxB A-98." evidence="4">
    <original>R</original>
    <variation>A</variation>
    <location>
        <position position="543"/>
    </location>
</feature>
<feature type="mutagenesis site" description="No longer activates ATPase; when associated with A-543." evidence="4">
    <original>E</original>
    <variation>Q</variation>
    <location>
        <position position="593"/>
    </location>
</feature>
<feature type="mutagenesis site" description="Increased intrinsic ATPase activity without concentration-dependency; when associated with A-543." evidence="4">
    <original>R</original>
    <variation>Q</variation>
    <location>
        <position position="616"/>
    </location>
</feature>
<feature type="mutagenesis site" description="No change in intrinsic ATPase activity." evidence="4">
    <original>R</original>
    <variation>A</variation>
    <location>
        <position position="892"/>
    </location>
</feature>
<feature type="mutagenesis site" description="No longer interacts with EsxB." evidence="4">
    <original>I</original>
    <variation>T</variation>
    <location>
        <position position="1163"/>
    </location>
</feature>
<feature type="mutagenesis site" description="No longer interacts with EsxB." evidence="4">
    <original>I</original>
    <variation>N</variation>
    <location>
        <position position="1179"/>
    </location>
</feature>
<feature type="mutagenesis site" description="No longer interacts with EsxB." evidence="4">
    <original>L</original>
    <variation>T</variation>
    <location>
        <position position="1208"/>
    </location>
</feature>
<feature type="turn" evidence="10">
    <location>
        <begin position="772"/>
        <end position="775"/>
    </location>
</feature>
<feature type="strand" evidence="10">
    <location>
        <begin position="780"/>
        <end position="782"/>
    </location>
</feature>
<feature type="turn" evidence="10">
    <location>
        <begin position="783"/>
        <end position="785"/>
    </location>
</feature>
<feature type="strand" evidence="10">
    <location>
        <begin position="786"/>
        <end position="788"/>
    </location>
</feature>
<feature type="turn" evidence="10">
    <location>
        <begin position="793"/>
        <end position="796"/>
    </location>
</feature>
<feature type="strand" evidence="10">
    <location>
        <begin position="797"/>
        <end position="806"/>
    </location>
</feature>
<feature type="strand" evidence="10">
    <location>
        <begin position="814"/>
        <end position="819"/>
    </location>
</feature>
<feature type="helix" evidence="10">
    <location>
        <begin position="823"/>
        <end position="825"/>
    </location>
</feature>
<feature type="strand" evidence="10">
    <location>
        <begin position="826"/>
        <end position="830"/>
    </location>
</feature>
<feature type="helix" evidence="10">
    <location>
        <begin position="837"/>
        <end position="850"/>
    </location>
</feature>
<feature type="turn" evidence="10">
    <location>
        <begin position="854"/>
        <end position="856"/>
    </location>
</feature>
<feature type="strand" evidence="10">
    <location>
        <begin position="857"/>
        <end position="862"/>
    </location>
</feature>
<feature type="helix" evidence="10">
    <location>
        <begin position="868"/>
        <end position="872"/>
    </location>
</feature>
<feature type="strand" evidence="10">
    <location>
        <begin position="878"/>
        <end position="882"/>
    </location>
</feature>
<feature type="helix" evidence="10">
    <location>
        <begin position="887"/>
        <end position="910"/>
    </location>
</feature>
<feature type="helix" evidence="10">
    <location>
        <begin position="916"/>
        <end position="923"/>
    </location>
</feature>
<feature type="turn" evidence="10">
    <location>
        <begin position="924"/>
        <end position="926"/>
    </location>
</feature>
<feature type="strand" evidence="10">
    <location>
        <begin position="935"/>
        <end position="941"/>
    </location>
</feature>
<feature type="helix" evidence="10">
    <location>
        <begin position="943"/>
        <end position="949"/>
    </location>
</feature>
<feature type="helix" evidence="10">
    <location>
        <begin position="951"/>
        <end position="963"/>
    </location>
</feature>
<feature type="helix" evidence="10">
    <location>
        <begin position="965"/>
        <end position="967"/>
    </location>
</feature>
<feature type="strand" evidence="10">
    <location>
        <begin position="969"/>
        <end position="974"/>
    </location>
</feature>
<feature type="helix" evidence="10">
    <location>
        <begin position="978"/>
        <end position="980"/>
    </location>
</feature>
<feature type="helix" evidence="10">
    <location>
        <begin position="983"/>
        <end position="986"/>
    </location>
</feature>
<feature type="strand" evidence="10">
    <location>
        <begin position="991"/>
        <end position="996"/>
    </location>
</feature>
<feature type="helix" evidence="10">
    <location>
        <begin position="1000"/>
        <end position="1002"/>
    </location>
</feature>
<feature type="helix" evidence="10">
    <location>
        <begin position="1007"/>
        <end position="1011"/>
    </location>
</feature>
<feature type="strand" evidence="10">
    <location>
        <begin position="1020"/>
        <end position="1022"/>
    </location>
</feature>
<feature type="strand" evidence="10">
    <location>
        <begin position="1028"/>
        <end position="1031"/>
    </location>
</feature>
<feature type="helix" evidence="10">
    <location>
        <begin position="1045"/>
        <end position="1059"/>
    </location>
</feature>
<feature type="strand" evidence="10">
    <location>
        <begin position="1073"/>
        <end position="1076"/>
    </location>
</feature>
<feature type="turn" evidence="10">
    <location>
        <begin position="1077"/>
        <end position="1079"/>
    </location>
</feature>
<feature type="helix" evidence="10">
    <location>
        <begin position="1083"/>
        <end position="1086"/>
    </location>
</feature>
<feature type="strand" evidence="10">
    <location>
        <begin position="1090"/>
        <end position="1095"/>
    </location>
</feature>
<feature type="turn" evidence="10">
    <location>
        <begin position="1096"/>
        <end position="1098"/>
    </location>
</feature>
<feature type="strand" evidence="10">
    <location>
        <begin position="1101"/>
        <end position="1104"/>
    </location>
</feature>
<feature type="turn" evidence="10">
    <location>
        <begin position="1106"/>
        <end position="1108"/>
    </location>
</feature>
<feature type="strand" evidence="10">
    <location>
        <begin position="1112"/>
        <end position="1116"/>
    </location>
</feature>
<feature type="helix" evidence="10">
    <location>
        <begin position="1122"/>
        <end position="1136"/>
    </location>
</feature>
<feature type="turn" evidence="10">
    <location>
        <begin position="1139"/>
        <end position="1141"/>
    </location>
</feature>
<feature type="strand" evidence="10">
    <location>
        <begin position="1142"/>
        <end position="1147"/>
    </location>
</feature>
<feature type="helix" evidence="10">
    <location>
        <begin position="1154"/>
        <end position="1156"/>
    </location>
</feature>
<feature type="strand" evidence="10">
    <location>
        <begin position="1157"/>
        <end position="1159"/>
    </location>
</feature>
<feature type="strand" evidence="10">
    <location>
        <begin position="1162"/>
        <end position="1166"/>
    </location>
</feature>
<feature type="helix" evidence="10">
    <location>
        <begin position="1169"/>
        <end position="1184"/>
    </location>
</feature>
<feature type="helix" evidence="10">
    <location>
        <begin position="1194"/>
        <end position="1199"/>
    </location>
</feature>
<feature type="strand" evidence="10">
    <location>
        <begin position="1207"/>
        <end position="1213"/>
    </location>
</feature>
<feature type="helix" evidence="10">
    <location>
        <begin position="1215"/>
        <end position="1217"/>
    </location>
</feature>
<feature type="helix" evidence="10">
    <location>
        <begin position="1226"/>
        <end position="1234"/>
    </location>
</feature>
<feature type="helix" evidence="10">
    <location>
        <begin position="1235"/>
        <end position="1238"/>
    </location>
</feature>
<feature type="strand" evidence="10">
    <location>
        <begin position="1240"/>
        <end position="1246"/>
    </location>
</feature>
<feature type="helix" evidence="10">
    <location>
        <begin position="1253"/>
        <end position="1255"/>
    </location>
</feature>
<feature type="helix" evidence="10">
    <location>
        <begin position="1258"/>
        <end position="1265"/>
    </location>
</feature>
<feature type="strand" evidence="10">
    <location>
        <begin position="1270"/>
        <end position="1274"/>
    </location>
</feature>
<feature type="helix" evidence="10">
    <location>
        <begin position="1277"/>
        <end position="1279"/>
    </location>
</feature>
<feature type="strand" evidence="10">
    <location>
        <begin position="1295"/>
        <end position="1300"/>
    </location>
</feature>
<feature type="turn" evidence="10">
    <location>
        <begin position="1301"/>
        <end position="1303"/>
    </location>
</feature>
<feature type="strand" evidence="10">
    <location>
        <begin position="1304"/>
        <end position="1312"/>
    </location>
</feature>